<gene>
    <name evidence="1" type="primary">rnpA</name>
    <name type="ordered locus">BCI_0134</name>
</gene>
<sequence length="115" mass="13941">MVKLHFSRNLRLLKPDHFAFVFQKPKLVRIQQMVILGRINTLVYPRVGMIIAKKYIKLAHERNHIKRLIRESFRLNQHKLCIMDFIIIAKSGLTKMNNFDIIKALEKLWHRYYRL</sequence>
<accession>Q1LTW1</accession>
<proteinExistence type="inferred from homology"/>
<name>RNPA_BAUCH</name>
<feature type="chain" id="PRO_1000021376" description="Ribonuclease P protein component">
    <location>
        <begin position="1"/>
        <end position="115"/>
    </location>
</feature>
<reference key="1">
    <citation type="journal article" date="2006" name="PLoS Biol.">
        <title>Metabolic complementarity and genomics of the dual bacterial symbiosis of sharpshooters.</title>
        <authorList>
            <person name="Wu D."/>
            <person name="Daugherty S.C."/>
            <person name="Van Aken S.E."/>
            <person name="Pai G.H."/>
            <person name="Watkins K.L."/>
            <person name="Khouri H."/>
            <person name="Tallon L.J."/>
            <person name="Zaborsky J.M."/>
            <person name="Dunbar H.E."/>
            <person name="Tran P.L."/>
            <person name="Moran N.A."/>
            <person name="Eisen J.A."/>
        </authorList>
    </citation>
    <scope>NUCLEOTIDE SEQUENCE [LARGE SCALE GENOMIC DNA]</scope>
</reference>
<comment type="function">
    <text evidence="1">RNaseP catalyzes the removal of the 5'-leader sequence from pre-tRNA to produce the mature 5'-terminus. It can also cleave other RNA substrates such as 4.5S RNA. The protein component plays an auxiliary but essential role in vivo by binding to the 5'-leader sequence and broadening the substrate specificity of the ribozyme.</text>
</comment>
<comment type="catalytic activity">
    <reaction evidence="1">
        <text>Endonucleolytic cleavage of RNA, removing 5'-extranucleotides from tRNA precursor.</text>
        <dbReference type="EC" id="3.1.26.5"/>
    </reaction>
</comment>
<comment type="subunit">
    <text evidence="1">Consists of a catalytic RNA component (M1 or rnpB) and a protein subunit.</text>
</comment>
<comment type="similarity">
    <text evidence="1">Belongs to the RnpA family.</text>
</comment>
<evidence type="ECO:0000255" key="1">
    <source>
        <dbReference type="HAMAP-Rule" id="MF_00227"/>
    </source>
</evidence>
<keyword id="KW-0255">Endonuclease</keyword>
<keyword id="KW-0378">Hydrolase</keyword>
<keyword id="KW-0540">Nuclease</keyword>
<keyword id="KW-1185">Reference proteome</keyword>
<keyword id="KW-0694">RNA-binding</keyword>
<keyword id="KW-0819">tRNA processing</keyword>
<dbReference type="EC" id="3.1.26.5" evidence="1"/>
<dbReference type="EMBL" id="CP000238">
    <property type="protein sequence ID" value="ABF13929.1"/>
    <property type="molecule type" value="Genomic_DNA"/>
</dbReference>
<dbReference type="RefSeq" id="WP_011520336.1">
    <property type="nucleotide sequence ID" value="NC_007984.1"/>
</dbReference>
<dbReference type="SMR" id="Q1LTW1"/>
<dbReference type="STRING" id="374463.BCI_0134"/>
<dbReference type="KEGG" id="bci:BCI_0134"/>
<dbReference type="HOGENOM" id="CLU_117179_11_0_6"/>
<dbReference type="OrthoDB" id="9796422at2"/>
<dbReference type="Proteomes" id="UP000002427">
    <property type="component" value="Chromosome"/>
</dbReference>
<dbReference type="GO" id="GO:0030677">
    <property type="term" value="C:ribonuclease P complex"/>
    <property type="evidence" value="ECO:0007669"/>
    <property type="project" value="TreeGrafter"/>
</dbReference>
<dbReference type="GO" id="GO:0042781">
    <property type="term" value="F:3'-tRNA processing endoribonuclease activity"/>
    <property type="evidence" value="ECO:0007669"/>
    <property type="project" value="TreeGrafter"/>
</dbReference>
<dbReference type="GO" id="GO:0004526">
    <property type="term" value="F:ribonuclease P activity"/>
    <property type="evidence" value="ECO:0007669"/>
    <property type="project" value="UniProtKB-UniRule"/>
</dbReference>
<dbReference type="GO" id="GO:0000049">
    <property type="term" value="F:tRNA binding"/>
    <property type="evidence" value="ECO:0007669"/>
    <property type="project" value="UniProtKB-UniRule"/>
</dbReference>
<dbReference type="GO" id="GO:0001682">
    <property type="term" value="P:tRNA 5'-leader removal"/>
    <property type="evidence" value="ECO:0007669"/>
    <property type="project" value="UniProtKB-UniRule"/>
</dbReference>
<dbReference type="Gene3D" id="3.30.230.10">
    <property type="match status" value="1"/>
</dbReference>
<dbReference type="HAMAP" id="MF_00227">
    <property type="entry name" value="RNase_P"/>
    <property type="match status" value="1"/>
</dbReference>
<dbReference type="InterPro" id="IPR020568">
    <property type="entry name" value="Ribosomal_Su5_D2-typ_SF"/>
</dbReference>
<dbReference type="InterPro" id="IPR014721">
    <property type="entry name" value="Ribsml_uS5_D2-typ_fold_subgr"/>
</dbReference>
<dbReference type="InterPro" id="IPR000100">
    <property type="entry name" value="RNase_P"/>
</dbReference>
<dbReference type="NCBIfam" id="TIGR00188">
    <property type="entry name" value="rnpA"/>
    <property type="match status" value="1"/>
</dbReference>
<dbReference type="PANTHER" id="PTHR33992">
    <property type="entry name" value="RIBONUCLEASE P PROTEIN COMPONENT"/>
    <property type="match status" value="1"/>
</dbReference>
<dbReference type="PANTHER" id="PTHR33992:SF1">
    <property type="entry name" value="RIBONUCLEASE P PROTEIN COMPONENT"/>
    <property type="match status" value="1"/>
</dbReference>
<dbReference type="Pfam" id="PF00825">
    <property type="entry name" value="Ribonuclease_P"/>
    <property type="match status" value="1"/>
</dbReference>
<dbReference type="SUPFAM" id="SSF54211">
    <property type="entry name" value="Ribosomal protein S5 domain 2-like"/>
    <property type="match status" value="1"/>
</dbReference>
<protein>
    <recommendedName>
        <fullName evidence="1">Ribonuclease P protein component</fullName>
        <shortName evidence="1">RNase P protein</shortName>
        <shortName evidence="1">RNaseP protein</shortName>
        <ecNumber evidence="1">3.1.26.5</ecNumber>
    </recommendedName>
    <alternativeName>
        <fullName evidence="1">Protein C5</fullName>
    </alternativeName>
</protein>
<organism>
    <name type="scientific">Baumannia cicadellinicola subsp. Homalodisca coagulata</name>
    <dbReference type="NCBI Taxonomy" id="374463"/>
    <lineage>
        <taxon>Bacteria</taxon>
        <taxon>Pseudomonadati</taxon>
        <taxon>Pseudomonadota</taxon>
        <taxon>Gammaproteobacteria</taxon>
        <taxon>Candidatus Palibaumannia</taxon>
    </lineage>
</organism>